<dbReference type="EC" id="3.6.5.2" evidence="2"/>
<dbReference type="EMBL" id="BC105393">
    <property type="protein sequence ID" value="AAI05394.1"/>
    <property type="molecule type" value="mRNA"/>
</dbReference>
<dbReference type="RefSeq" id="NP_001069701.1">
    <property type="nucleotide sequence ID" value="NM_001076233.1"/>
</dbReference>
<dbReference type="SMR" id="Q2HJH2"/>
<dbReference type="FunCoup" id="Q2HJH2">
    <property type="interactions" value="2518"/>
</dbReference>
<dbReference type="STRING" id="9913.ENSBTAP00000059643"/>
<dbReference type="PaxDb" id="9913-ENSBTAP00000054670"/>
<dbReference type="PeptideAtlas" id="Q2HJH2"/>
<dbReference type="GeneID" id="540685"/>
<dbReference type="KEGG" id="bta:540685"/>
<dbReference type="CTD" id="81876"/>
<dbReference type="eggNOG" id="KOG0084">
    <property type="taxonomic scope" value="Eukaryota"/>
</dbReference>
<dbReference type="InParanoid" id="Q2HJH2"/>
<dbReference type="OrthoDB" id="9989112at2759"/>
<dbReference type="Proteomes" id="UP000009136">
    <property type="component" value="Unplaced"/>
</dbReference>
<dbReference type="GO" id="GO:0012505">
    <property type="term" value="C:endomembrane system"/>
    <property type="evidence" value="ECO:0000318"/>
    <property type="project" value="GO_Central"/>
</dbReference>
<dbReference type="GO" id="GO:0048471">
    <property type="term" value="C:perinuclear region of cytoplasm"/>
    <property type="evidence" value="ECO:0007669"/>
    <property type="project" value="UniProtKB-SubCell"/>
</dbReference>
<dbReference type="GO" id="GO:0034045">
    <property type="term" value="C:phagophore assembly site membrane"/>
    <property type="evidence" value="ECO:0007669"/>
    <property type="project" value="UniProtKB-SubCell"/>
</dbReference>
<dbReference type="GO" id="GO:0003925">
    <property type="term" value="F:G protein activity"/>
    <property type="evidence" value="ECO:0007669"/>
    <property type="project" value="UniProtKB-EC"/>
</dbReference>
<dbReference type="GO" id="GO:0005525">
    <property type="term" value="F:GTP binding"/>
    <property type="evidence" value="ECO:0000250"/>
    <property type="project" value="UniProtKB"/>
</dbReference>
<dbReference type="GO" id="GO:0003924">
    <property type="term" value="F:GTPase activity"/>
    <property type="evidence" value="ECO:0000318"/>
    <property type="project" value="GO_Central"/>
</dbReference>
<dbReference type="GO" id="GO:0000045">
    <property type="term" value="P:autophagosome assembly"/>
    <property type="evidence" value="ECO:0000318"/>
    <property type="project" value="GO_Central"/>
</dbReference>
<dbReference type="GO" id="GO:0007030">
    <property type="term" value="P:Golgi organization"/>
    <property type="evidence" value="ECO:0000250"/>
    <property type="project" value="UniProtKB"/>
</dbReference>
<dbReference type="GO" id="GO:0006886">
    <property type="term" value="P:intracellular protein transport"/>
    <property type="evidence" value="ECO:0000318"/>
    <property type="project" value="GO_Central"/>
</dbReference>
<dbReference type="CDD" id="cd01869">
    <property type="entry name" value="Rab1_Ypt1"/>
    <property type="match status" value="1"/>
</dbReference>
<dbReference type="FunFam" id="3.40.50.300:FF:000069">
    <property type="entry name" value="Ras GTP-binding protein YPT1"/>
    <property type="match status" value="1"/>
</dbReference>
<dbReference type="Gene3D" id="3.40.50.300">
    <property type="entry name" value="P-loop containing nucleotide triphosphate hydrolases"/>
    <property type="match status" value="1"/>
</dbReference>
<dbReference type="InterPro" id="IPR027417">
    <property type="entry name" value="P-loop_NTPase"/>
</dbReference>
<dbReference type="InterPro" id="IPR050227">
    <property type="entry name" value="Rab"/>
</dbReference>
<dbReference type="InterPro" id="IPR005225">
    <property type="entry name" value="Small_GTP-bd"/>
</dbReference>
<dbReference type="InterPro" id="IPR001806">
    <property type="entry name" value="Small_GTPase"/>
</dbReference>
<dbReference type="NCBIfam" id="TIGR00231">
    <property type="entry name" value="small_GTP"/>
    <property type="match status" value="1"/>
</dbReference>
<dbReference type="PANTHER" id="PTHR47977">
    <property type="entry name" value="RAS-RELATED PROTEIN RAB"/>
    <property type="match status" value="1"/>
</dbReference>
<dbReference type="Pfam" id="PF00071">
    <property type="entry name" value="Ras"/>
    <property type="match status" value="1"/>
</dbReference>
<dbReference type="PRINTS" id="PR00449">
    <property type="entry name" value="RASTRNSFRMNG"/>
</dbReference>
<dbReference type="SMART" id="SM00177">
    <property type="entry name" value="ARF"/>
    <property type="match status" value="1"/>
</dbReference>
<dbReference type="SMART" id="SM00175">
    <property type="entry name" value="RAB"/>
    <property type="match status" value="1"/>
</dbReference>
<dbReference type="SMART" id="SM00176">
    <property type="entry name" value="RAN"/>
    <property type="match status" value="1"/>
</dbReference>
<dbReference type="SMART" id="SM00173">
    <property type="entry name" value="RAS"/>
    <property type="match status" value="1"/>
</dbReference>
<dbReference type="SMART" id="SM00174">
    <property type="entry name" value="RHO"/>
    <property type="match status" value="1"/>
</dbReference>
<dbReference type="SUPFAM" id="SSF52540">
    <property type="entry name" value="P-loop containing nucleoside triphosphate hydrolases"/>
    <property type="match status" value="1"/>
</dbReference>
<dbReference type="PROSITE" id="PS51419">
    <property type="entry name" value="RAB"/>
    <property type="match status" value="1"/>
</dbReference>
<comment type="function">
    <text evidence="1 4">The small GTPases Rab are key regulators of intracellular membrane trafficking, from the formation of transport vesicles to their fusion with membranes. Rabs cycle between an inactive GDP-bound form and an active GTP-bound form that is able to recruit to membranes different set of downstream effectors directly responsible for vesicle formation, movement, tethering and fusion (By similarity). Plays a role in the initial events of the autophagic vacuole development which take place at specialized regions of the endoplasmic reticulum (By similarity). Regulates vesicular transport between the endoplasmic reticulum and successive Golgi compartments. Required to modulate the compacted morphology of the Golgi. Promotes the recruitment of lipid phosphatase MTMR6 to the endoplasmic reticulum-Golgi intermediate compartment (By similarity).</text>
</comment>
<comment type="catalytic activity">
    <reaction evidence="2">
        <text>GTP + H2O = GDP + phosphate + H(+)</text>
        <dbReference type="Rhea" id="RHEA:19669"/>
        <dbReference type="ChEBI" id="CHEBI:15377"/>
        <dbReference type="ChEBI" id="CHEBI:15378"/>
        <dbReference type="ChEBI" id="CHEBI:37565"/>
        <dbReference type="ChEBI" id="CHEBI:43474"/>
        <dbReference type="ChEBI" id="CHEBI:58189"/>
        <dbReference type="EC" id="3.6.5.2"/>
    </reaction>
    <physiologicalReaction direction="left-to-right" evidence="2">
        <dbReference type="Rhea" id="RHEA:19670"/>
    </physiologicalReaction>
</comment>
<comment type="cofactor">
    <cofactor evidence="4">
        <name>Mg(2+)</name>
        <dbReference type="ChEBI" id="CHEBI:18420"/>
    </cofactor>
</comment>
<comment type="activity regulation">
    <text evidence="4">Regulated by guanine nucleotide exchange factors (GEFs) which promote the exchange of bound GDP for free GTP. Regulated by GTPase activating proteins (GAPs) including TBC1D20 which increases the GTP hydrolysis activity. Inhibited by GDP dissociation inhibitors (GDIs).</text>
</comment>
<comment type="subunit">
    <text evidence="3 4">Interacts with MICAL1 and MICAL2. Interacts (in GTP-bound form) with MICALCL, MICAL1 and MILCAL3. Interacts with GDI1; the interaction requires the GDP-bound state. Interacts with CHM/REP1; the interaction requires the GDP-bound form and is necessary for prenylation by GGTase II. Interacts with RabGAP TBC1D20. Interacts (in GDP-bound form) with lipid phosphatase MTMR6 (via GRAM domain); the interaction regulates MTMR6 recruitment to the endoplasmic reticulum-Golgi intermediate compartment (By similarity). Interacts (in GDP-bound form) with lipid phosphatase MTMR7 (By similarity).</text>
</comment>
<comment type="subcellular location">
    <subcellularLocation>
        <location evidence="1">Cytoplasm</location>
    </subcellularLocation>
    <subcellularLocation>
        <location evidence="1">Membrane</location>
        <topology evidence="1">Lipid-anchor</topology>
        <orientation evidence="1">Cytoplasmic side</orientation>
    </subcellularLocation>
    <subcellularLocation>
        <location evidence="4">Preautophagosomal structure membrane</location>
        <topology evidence="1">Lipid-anchor</topology>
        <orientation evidence="1">Cytoplasmic side</orientation>
    </subcellularLocation>
    <subcellularLocation>
        <location evidence="1">Cytoplasm</location>
        <location evidence="1">Perinuclear region</location>
    </subcellularLocation>
    <text evidence="1 4">Targeted by REP1 to membranes of specific subcellular compartments including endoplasmic reticulum, Golgi apparatus, and intermediate vesicles between these two compartments. In the GDP-form, colocalizes with GDI in the cytoplasm (By similarity). Co-localizes with MTMR6 to the endoplasmic reticulum-Golgi intermediate compartment and to the peri-Golgi region (By similarity).</text>
</comment>
<comment type="domain">
    <text evidence="4">Switch 1, switch 2 and the interswitch regions are characteristic of Rab GTPases and mediate the interactions with Rab downstream effectors. The switch regions undergo conformational changes upon nucleotide binding which drives interaction with specific sets of effector proteins, with most effectors only binding to GTP-bound Rab.</text>
</comment>
<comment type="PTM">
    <text evidence="4">Prenylated; by GGTase II, only after interaction of the substrate with Rab escort protein 1 (REP1).</text>
</comment>
<comment type="miscellaneous">
    <text evidence="4">Rab-1B binds GTP and GDP and possesses intrinsic GTPase activity.</text>
</comment>
<comment type="similarity">
    <text evidence="7">Belongs to the small GTPase superfamily. Rab family.</text>
</comment>
<feature type="chain" id="PRO_0000236247" description="Ras-related protein Rab-1B">
    <location>
        <begin position="1"/>
        <end position="201"/>
    </location>
</feature>
<feature type="region of interest" description="Switch 2 region; Required for interaction with REP1/CHM" evidence="4">
    <location>
        <begin position="64"/>
        <end position="83"/>
    </location>
</feature>
<feature type="region of interest" description="Disordered" evidence="6">
    <location>
        <begin position="173"/>
        <end position="201"/>
    </location>
</feature>
<feature type="short sequence motif" description="Switch 1" evidence="4">
    <location>
        <begin position="30"/>
        <end position="45"/>
    </location>
</feature>
<feature type="short sequence motif" description="Switch 2" evidence="4">
    <location>
        <begin position="65"/>
        <end position="80"/>
    </location>
</feature>
<feature type="binding site" evidence="4">
    <location>
        <position position="17"/>
    </location>
    <ligand>
        <name>GTP</name>
        <dbReference type="ChEBI" id="CHEBI:37565"/>
    </ligand>
</feature>
<feature type="binding site" evidence="4">
    <location>
        <position position="18"/>
    </location>
    <ligand>
        <name>GTP</name>
        <dbReference type="ChEBI" id="CHEBI:37565"/>
    </ligand>
</feature>
<feature type="binding site" evidence="4">
    <location>
        <position position="19"/>
    </location>
    <ligand>
        <name>GTP</name>
        <dbReference type="ChEBI" id="CHEBI:37565"/>
    </ligand>
</feature>
<feature type="binding site" evidence="4">
    <location>
        <position position="20"/>
    </location>
    <ligand>
        <name>GTP</name>
        <dbReference type="ChEBI" id="CHEBI:37565"/>
    </ligand>
</feature>
<feature type="binding site" evidence="4">
    <location>
        <position position="21"/>
    </location>
    <ligand>
        <name>GTP</name>
        <dbReference type="ChEBI" id="CHEBI:37565"/>
    </ligand>
</feature>
<feature type="binding site" evidence="4">
    <location>
        <position position="22"/>
    </location>
    <ligand>
        <name>GTP</name>
        <dbReference type="ChEBI" id="CHEBI:37565"/>
    </ligand>
</feature>
<feature type="binding site" evidence="4">
    <location>
        <position position="22"/>
    </location>
    <ligand>
        <name>Mg(2+)</name>
        <dbReference type="ChEBI" id="CHEBI:18420"/>
    </ligand>
</feature>
<feature type="binding site" evidence="4">
    <location>
        <position position="23"/>
    </location>
    <ligand>
        <name>GTP</name>
        <dbReference type="ChEBI" id="CHEBI:37565"/>
    </ligand>
</feature>
<feature type="binding site" evidence="4">
    <location>
        <position position="33"/>
    </location>
    <ligand>
        <name>GTP</name>
        <dbReference type="ChEBI" id="CHEBI:37565"/>
    </ligand>
</feature>
<feature type="binding site" evidence="4">
    <location>
        <position position="34"/>
    </location>
    <ligand>
        <name>GTP</name>
        <dbReference type="ChEBI" id="CHEBI:37565"/>
    </ligand>
</feature>
<feature type="binding site" evidence="4">
    <location>
        <position position="35"/>
    </location>
    <ligand>
        <name>GTP</name>
        <dbReference type="ChEBI" id="CHEBI:37565"/>
    </ligand>
</feature>
<feature type="binding site" evidence="4">
    <location>
        <position position="36"/>
    </location>
    <ligand>
        <name>GTP</name>
        <dbReference type="ChEBI" id="CHEBI:37565"/>
    </ligand>
</feature>
<feature type="binding site" evidence="4">
    <location>
        <position position="39"/>
    </location>
    <ligand>
        <name>GTP</name>
        <dbReference type="ChEBI" id="CHEBI:37565"/>
    </ligand>
</feature>
<feature type="binding site" evidence="4">
    <location>
        <position position="40"/>
    </location>
    <ligand>
        <name>GTP</name>
        <dbReference type="ChEBI" id="CHEBI:37565"/>
    </ligand>
</feature>
<feature type="binding site" evidence="4">
    <location>
        <position position="40"/>
    </location>
    <ligand>
        <name>Mg(2+)</name>
        <dbReference type="ChEBI" id="CHEBI:18420"/>
    </ligand>
</feature>
<feature type="binding site" evidence="4">
    <location>
        <position position="63"/>
    </location>
    <ligand>
        <name>Mg(2+)</name>
        <dbReference type="ChEBI" id="CHEBI:18420"/>
    </ligand>
</feature>
<feature type="binding site" evidence="4">
    <location>
        <position position="66"/>
    </location>
    <ligand>
        <name>GTP</name>
        <dbReference type="ChEBI" id="CHEBI:37565"/>
    </ligand>
</feature>
<feature type="binding site" evidence="4">
    <location>
        <position position="121"/>
    </location>
    <ligand>
        <name>GTP</name>
        <dbReference type="ChEBI" id="CHEBI:37565"/>
    </ligand>
</feature>
<feature type="binding site" evidence="4">
    <location>
        <position position="122"/>
    </location>
    <ligand>
        <name>GTP</name>
        <dbReference type="ChEBI" id="CHEBI:37565"/>
    </ligand>
</feature>
<feature type="binding site" evidence="4">
    <location>
        <position position="124"/>
    </location>
    <ligand>
        <name>GTP</name>
        <dbReference type="ChEBI" id="CHEBI:37565"/>
    </ligand>
</feature>
<feature type="binding site" evidence="4">
    <location>
        <position position="151"/>
    </location>
    <ligand>
        <name>GTP</name>
        <dbReference type="ChEBI" id="CHEBI:37565"/>
    </ligand>
</feature>
<feature type="binding site" evidence="4">
    <location>
        <position position="152"/>
    </location>
    <ligand>
        <name>GTP</name>
        <dbReference type="ChEBI" id="CHEBI:37565"/>
    </ligand>
</feature>
<feature type="binding site" evidence="4">
    <location>
        <position position="153"/>
    </location>
    <ligand>
        <name>GTP</name>
        <dbReference type="ChEBI" id="CHEBI:37565"/>
    </ligand>
</feature>
<feature type="modified residue" description="N-acetylmethionine" evidence="4">
    <location>
        <position position="1"/>
    </location>
</feature>
<feature type="modified residue" description="Cysteine methyl ester" evidence="5">
    <location>
        <position position="201"/>
    </location>
</feature>
<feature type="lipid moiety-binding region" description="S-geranylgeranyl cysteine" evidence="4">
    <location>
        <position position="200"/>
    </location>
</feature>
<feature type="lipid moiety-binding region" description="S-geranylgeranyl cysteine" evidence="4">
    <location>
        <position position="201"/>
    </location>
</feature>
<evidence type="ECO:0000250" key="1">
    <source>
        <dbReference type="UniProtKB" id="P10536"/>
    </source>
</evidence>
<evidence type="ECO:0000250" key="2">
    <source>
        <dbReference type="UniProtKB" id="P62820"/>
    </source>
</evidence>
<evidence type="ECO:0000250" key="3">
    <source>
        <dbReference type="UniProtKB" id="Q9D1G1"/>
    </source>
</evidence>
<evidence type="ECO:0000250" key="4">
    <source>
        <dbReference type="UniProtKB" id="Q9H0U4"/>
    </source>
</evidence>
<evidence type="ECO:0000255" key="5"/>
<evidence type="ECO:0000256" key="6">
    <source>
        <dbReference type="SAM" id="MobiDB-lite"/>
    </source>
</evidence>
<evidence type="ECO:0000305" key="7"/>
<keyword id="KW-0007">Acetylation</keyword>
<keyword id="KW-0072">Autophagy</keyword>
<keyword id="KW-0963">Cytoplasm</keyword>
<keyword id="KW-0342">GTP-binding</keyword>
<keyword id="KW-0378">Hydrolase</keyword>
<keyword id="KW-0449">Lipoprotein</keyword>
<keyword id="KW-0460">Magnesium</keyword>
<keyword id="KW-0472">Membrane</keyword>
<keyword id="KW-0479">Metal-binding</keyword>
<keyword id="KW-0488">Methylation</keyword>
<keyword id="KW-0547">Nucleotide-binding</keyword>
<keyword id="KW-0597">Phosphoprotein</keyword>
<keyword id="KW-0636">Prenylation</keyword>
<keyword id="KW-0653">Protein transport</keyword>
<keyword id="KW-1185">Reference proteome</keyword>
<keyword id="KW-0813">Transport</keyword>
<organism>
    <name type="scientific">Bos taurus</name>
    <name type="common">Bovine</name>
    <dbReference type="NCBI Taxonomy" id="9913"/>
    <lineage>
        <taxon>Eukaryota</taxon>
        <taxon>Metazoa</taxon>
        <taxon>Chordata</taxon>
        <taxon>Craniata</taxon>
        <taxon>Vertebrata</taxon>
        <taxon>Euteleostomi</taxon>
        <taxon>Mammalia</taxon>
        <taxon>Eutheria</taxon>
        <taxon>Laurasiatheria</taxon>
        <taxon>Artiodactyla</taxon>
        <taxon>Ruminantia</taxon>
        <taxon>Pecora</taxon>
        <taxon>Bovidae</taxon>
        <taxon>Bovinae</taxon>
        <taxon>Bos</taxon>
    </lineage>
</organism>
<accession>Q2HJH2</accession>
<sequence length="201" mass="22202">MNPEYDYLFKLLLIGDSGVGKSCLLLRFADDTYTESYISTIGVDFKIRTIELDGKTIKLQIWDTAGQERFRTITSSYYRGAHGIIVVYDVTDQESYANVKQWLQEIDRYASENVNKLLVGNKSDLTTKKVVDNTTAKEFADSLGIPFLETSAKNATNVEQAFMTMAAEIKKRMGPGAASGGERPNLKIDSTPVKQAGGGCC</sequence>
<protein>
    <recommendedName>
        <fullName>Ras-related protein Rab-1B</fullName>
        <ecNumber evidence="2">3.6.5.2</ecNumber>
    </recommendedName>
</protein>
<proteinExistence type="evidence at transcript level"/>
<gene>
    <name type="primary">RAB1B</name>
</gene>
<reference key="1">
    <citation type="submission" date="2005-09" db="EMBL/GenBank/DDBJ databases">
        <authorList>
            <consortium name="NIH - Mammalian Gene Collection (MGC) project"/>
        </authorList>
    </citation>
    <scope>NUCLEOTIDE SEQUENCE [LARGE SCALE MRNA]</scope>
    <source>
        <strain>Crossbred X Angus</strain>
        <tissue>Ileum</tissue>
    </source>
</reference>
<name>RAB1B_BOVIN</name>